<comment type="function">
    <text evidence="3 4 5">O-methyltransferase involved in the biosynthesis of furocoumarins natural products such as bergapten, a photosensitizer used for medical purpose such as treating psoriasis and vitiligo or facilitating resistance to microbial infection and other stresses (PubMed:27252733, PubMed:30934718, PubMed:31666994). Catalyzes specifically the methylation of bergaptol (PubMed:27252733, PubMed:30934718, PubMed:31666994). Not active on xanthotol, isoscopoletin, scopoletin and esculetin (PubMed:27252733, PubMed:30934718).</text>
</comment>
<comment type="catalytic activity">
    <reaction evidence="3 4 5">
        <text>bergaptol + S-adenosyl-L-methionine = bergapten + S-adenosyl-L-homocysteine</text>
        <dbReference type="Rhea" id="RHEA:11808"/>
        <dbReference type="ChEBI" id="CHEBI:18293"/>
        <dbReference type="ChEBI" id="CHEBI:57856"/>
        <dbReference type="ChEBI" id="CHEBI:59789"/>
        <dbReference type="ChEBI" id="CHEBI:77728"/>
        <dbReference type="EC" id="2.1.1.69"/>
    </reaction>
    <physiologicalReaction direction="left-to-right" evidence="3 4 5">
        <dbReference type="Rhea" id="RHEA:11809"/>
    </physiologicalReaction>
</comment>
<comment type="pathway">
    <text evidence="3 4 5">Aromatic compound metabolism.</text>
</comment>
<comment type="pathway">
    <text evidence="3 4 5">Secondary metabolite biosynthesis.</text>
</comment>
<comment type="subunit">
    <text evidence="5">Homodimer.</text>
</comment>
<comment type="subcellular location">
    <subcellularLocation>
        <location evidence="3">Cytoplasm</location>
    </subcellularLocation>
</comment>
<comment type="tissue specificity">
    <text evidence="3">Mostly expressed in roots and, to a lower extent, in stems and leaves.</text>
</comment>
<comment type="induction">
    <text evidence="3">Induced by methyl jasmonate (MeJA).</text>
</comment>
<comment type="biotechnology">
    <text evidence="7">The high-activity Ile-320 mutant could be used in metabolic engineering to produce bergapten in order to treat depigmentation disorder.</text>
</comment>
<comment type="similarity">
    <text evidence="2 8">Belongs to the class I-like SAM-binding methyltransferase superfamily. Cation-independent O-methyltransferase family. COMT subfamily.</text>
</comment>
<dbReference type="EC" id="2.1.1.69" evidence="2 3 4 5"/>
<dbReference type="EMBL" id="KU359196">
    <property type="protein sequence ID" value="ANA75355.1"/>
    <property type="molecule type" value="mRNA"/>
</dbReference>
<dbReference type="PDB" id="5XOH">
    <property type="method" value="X-ray"/>
    <property type="resolution" value="2.20 A"/>
    <property type="chains" value="A=1-359"/>
</dbReference>
<dbReference type="PDBsum" id="5XOH"/>
<dbReference type="SMR" id="A0A166U5H3"/>
<dbReference type="BRENDA" id="2.1.1.69">
    <property type="organism ID" value="15750"/>
</dbReference>
<dbReference type="GO" id="GO:0005737">
    <property type="term" value="C:cytoplasm"/>
    <property type="evidence" value="ECO:0000314"/>
    <property type="project" value="UniProtKB"/>
</dbReference>
<dbReference type="GO" id="GO:0030752">
    <property type="term" value="F:5-hydroxyfuranocoumarin 5-O-methyltransferase activity"/>
    <property type="evidence" value="ECO:0007669"/>
    <property type="project" value="UniProtKB-EC"/>
</dbReference>
<dbReference type="GO" id="GO:0008171">
    <property type="term" value="F:O-methyltransferase activity"/>
    <property type="evidence" value="ECO:0000314"/>
    <property type="project" value="UniProtKB"/>
</dbReference>
<dbReference type="GO" id="GO:0046983">
    <property type="term" value="F:protein dimerization activity"/>
    <property type="evidence" value="ECO:0007669"/>
    <property type="project" value="InterPro"/>
</dbReference>
<dbReference type="GO" id="GO:0008757">
    <property type="term" value="F:S-adenosylmethionine-dependent methyltransferase activity"/>
    <property type="evidence" value="ECO:0000314"/>
    <property type="project" value="UniProtKB"/>
</dbReference>
<dbReference type="GO" id="GO:0009805">
    <property type="term" value="P:coumarin biosynthetic process"/>
    <property type="evidence" value="ECO:0000314"/>
    <property type="project" value="UniProtKB"/>
</dbReference>
<dbReference type="GO" id="GO:0032259">
    <property type="term" value="P:methylation"/>
    <property type="evidence" value="ECO:0007669"/>
    <property type="project" value="UniProtKB-KW"/>
</dbReference>
<dbReference type="GO" id="GO:0009753">
    <property type="term" value="P:response to jasmonic acid"/>
    <property type="evidence" value="ECO:0000270"/>
    <property type="project" value="UniProtKB"/>
</dbReference>
<dbReference type="CDD" id="cd02440">
    <property type="entry name" value="AdoMet_MTases"/>
    <property type="match status" value="1"/>
</dbReference>
<dbReference type="FunFam" id="1.10.10.10:FF:000357">
    <property type="entry name" value="Caffeic acid 3-O-methyltransferase"/>
    <property type="match status" value="1"/>
</dbReference>
<dbReference type="FunFam" id="3.40.50.150:FF:000061">
    <property type="entry name" value="Caffeic acid O-methyltransferase"/>
    <property type="match status" value="1"/>
</dbReference>
<dbReference type="Gene3D" id="3.40.50.150">
    <property type="entry name" value="Vaccinia Virus protein VP39"/>
    <property type="match status" value="1"/>
</dbReference>
<dbReference type="Gene3D" id="1.10.10.10">
    <property type="entry name" value="Winged helix-like DNA-binding domain superfamily/Winged helix DNA-binding domain"/>
    <property type="match status" value="1"/>
</dbReference>
<dbReference type="InterPro" id="IPR016461">
    <property type="entry name" value="COMT-like"/>
</dbReference>
<dbReference type="InterPro" id="IPR001077">
    <property type="entry name" value="O_MeTrfase_dom"/>
</dbReference>
<dbReference type="InterPro" id="IPR012967">
    <property type="entry name" value="Plant_O-MeTrfase_dimerisation"/>
</dbReference>
<dbReference type="InterPro" id="IPR029063">
    <property type="entry name" value="SAM-dependent_MTases_sf"/>
</dbReference>
<dbReference type="InterPro" id="IPR036388">
    <property type="entry name" value="WH-like_DNA-bd_sf"/>
</dbReference>
<dbReference type="InterPro" id="IPR036390">
    <property type="entry name" value="WH_DNA-bd_sf"/>
</dbReference>
<dbReference type="PANTHER" id="PTHR11746">
    <property type="entry name" value="O-METHYLTRANSFERASE"/>
    <property type="match status" value="1"/>
</dbReference>
<dbReference type="Pfam" id="PF08100">
    <property type="entry name" value="Dimerisation"/>
    <property type="match status" value="1"/>
</dbReference>
<dbReference type="Pfam" id="PF00891">
    <property type="entry name" value="Methyltransf_2"/>
    <property type="match status" value="1"/>
</dbReference>
<dbReference type="PIRSF" id="PIRSF005739">
    <property type="entry name" value="O-mtase"/>
    <property type="match status" value="1"/>
</dbReference>
<dbReference type="SUPFAM" id="SSF53335">
    <property type="entry name" value="S-adenosyl-L-methionine-dependent methyltransferases"/>
    <property type="match status" value="1"/>
</dbReference>
<dbReference type="SUPFAM" id="SSF46785">
    <property type="entry name" value="Winged helix' DNA-binding domain"/>
    <property type="match status" value="1"/>
</dbReference>
<dbReference type="PROSITE" id="PS51683">
    <property type="entry name" value="SAM_OMT_II"/>
    <property type="match status" value="1"/>
</dbReference>
<reference key="1">
    <citation type="journal article" date="2016" name="Front. Plant Sci.">
        <title>Cloning, functional characterization, and catalytic mechanism of a bergaptol O-methyltransferase from Peucedanum praeruptorum Dunn.</title>
        <authorList>
            <person name="Zhao Y."/>
            <person name="Wang N."/>
            <person name="Zeng Z."/>
            <person name="Xu S."/>
            <person name="Huang C."/>
            <person name="Wang W."/>
            <person name="Liu T."/>
            <person name="Luo J."/>
            <person name="Kong L."/>
        </authorList>
    </citation>
    <scope>NUCLEOTIDE SEQUENCE [MRNA]</scope>
    <scope>FUNCTION</scope>
    <scope>CATALYTIC ACTIVITY</scope>
    <scope>PATHWAY</scope>
    <scope>BIOPHYSICOCHEMICAL PROPERTIES</scope>
    <scope>TISSUE SPECIFICITY</scope>
    <scope>INDUCTION BY METHYL JASMONATE</scope>
    <scope>SUBCELLULAR LOCATION</scope>
    <scope>MUTAGENESIS OF PHE-171; MET-175; ASP-226; HIS-264 AND LEU-312</scope>
</reference>
<reference key="2">
    <citation type="journal article" date="2019" name="Int. J. Mol. Sci.">
        <title>The molecular and structural basis of O-methylation reaction in coumarin biosynthesis in Peucedanum praeruptorum Dunn.</title>
        <authorList>
            <person name="Zhao Y."/>
            <person name="Wang N."/>
            <person name="Sui Z."/>
            <person name="Huang C."/>
            <person name="Zeng Z."/>
            <person name="Kong L."/>
        </authorList>
    </citation>
    <scope>FUNCTION</scope>
    <scope>CATALYTIC ACTIVITY</scope>
    <scope>PATHWAY</scope>
</reference>
<reference evidence="9" key="3">
    <citation type="journal article" date="2020" name="J. Adv. Res.">
        <title>Structure-based tailoring of the first coumarins-specific bergaptol O-methyltransferase to synthesize bergapten for depigmentation disorder treatment.</title>
        <authorList>
            <person name="Zhao Y."/>
            <person name="Wang N."/>
            <person name="Wu H."/>
            <person name="Zhou Y."/>
            <person name="Huang C."/>
            <person name="Luo J."/>
            <person name="Zeng Z."/>
            <person name="Kong L."/>
        </authorList>
    </citation>
    <scope>X-RAY CRYSTALLOGRAPHY (2.20 ANGSTROMS) IN COMPLEX WITH BERGAPTOL AND S-ADENOSYL-L-HOMOCYSTEINE</scope>
    <scope>FUNCTION</scope>
    <scope>CATALYTIC ACTIVITY</scope>
    <scope>PATHWAY</scope>
    <scope>MUTAGENESIS OF LEU-122; HIS-126; ILE-157; PHE-158; MET-175; TRP-261; SER-265; LEU-312; VAL-315; MET-316; TYR-319 AND VAL-320</scope>
    <scope>BIOTECHNOLOGY</scope>
    <scope>HOMODIMERIZATION</scope>
</reference>
<accession>A0A166U5H3</accession>
<feature type="chain" id="PRO_0000454878" description="Bergaptol O-methyltransferase">
    <location>
        <begin position="1"/>
        <end position="359"/>
    </location>
</feature>
<feature type="active site" description="Proton acceptor" evidence="2">
    <location>
        <position position="264"/>
    </location>
</feature>
<feature type="binding site" evidence="5 9">
    <location>
        <position position="126"/>
    </location>
    <ligand>
        <name>bergaptol</name>
        <dbReference type="ChEBI" id="CHEBI:77728"/>
    </ligand>
</feature>
<feature type="binding site" evidence="5 9">
    <location>
        <position position="179"/>
    </location>
    <ligand>
        <name>S-adenosyl-L-homocysteine</name>
        <dbReference type="ChEBI" id="CHEBI:57856"/>
    </ligand>
</feature>
<feature type="binding site" evidence="5 9">
    <location>
        <position position="203"/>
    </location>
    <ligand>
        <name>S-adenosyl-L-homocysteine</name>
        <dbReference type="ChEBI" id="CHEBI:57856"/>
    </ligand>
</feature>
<feature type="binding site" evidence="5 9">
    <location>
        <position position="226"/>
    </location>
    <ligand>
        <name>S-adenosyl-L-homocysteine</name>
        <dbReference type="ChEBI" id="CHEBI:57856"/>
    </ligand>
</feature>
<feature type="binding site" evidence="5 9">
    <location>
        <position position="246"/>
    </location>
    <ligand>
        <name>S-adenosyl-L-homocysteine</name>
        <dbReference type="ChEBI" id="CHEBI:57856"/>
    </ligand>
</feature>
<feature type="binding site" evidence="5 9">
    <location>
        <position position="260"/>
    </location>
    <ligand>
        <name>S-adenosyl-L-homocysteine</name>
        <dbReference type="ChEBI" id="CHEBI:57856"/>
    </ligand>
</feature>
<feature type="binding site" evidence="5 9">
    <location>
        <position position="264"/>
    </location>
    <ligand>
        <name>bergaptol</name>
        <dbReference type="ChEBI" id="CHEBI:77728"/>
    </ligand>
</feature>
<feature type="site" description="Determines the catalytic selectivity of hydroxyl groups in esculetin" evidence="1">
    <location>
        <position position="126"/>
    </location>
</feature>
<feature type="mutagenesis site" description="Slightly reduced catalytic activity." evidence="5">
    <original>L</original>
    <variation>F</variation>
    <location>
        <position position="122"/>
    </location>
</feature>
<feature type="mutagenesis site" description="Reduced catalytic activity. Strongly reduced catalytic activity; when associated with H-261. Strongly reduced catalytic activity; when associated with F-126 and H-261." evidence="5">
    <original>L</original>
    <variation>H</variation>
    <location>
        <position position="122"/>
    </location>
</feature>
<feature type="mutagenesis site" description="Abolished catalytic activity." evidence="5">
    <original>L</original>
    <variation>R</variation>
    <location>
        <position position="122"/>
    </location>
</feature>
<feature type="mutagenesis site" description="Strongly reduced catalytic activity; when associated with H-122 and H-261." evidence="5">
    <original>H</original>
    <variation>F</variation>
    <location>
        <position position="126"/>
    </location>
</feature>
<feature type="mutagenesis site" description="Increased catalytic activity; when associated with I-320." evidence="5">
    <original>I</original>
    <variation>F</variation>
    <location>
        <position position="157"/>
    </location>
</feature>
<feature type="mutagenesis site" description="Reduced catalytic activity." evidence="5">
    <original>I</original>
    <variation>H</variation>
    <location>
        <position position="157"/>
    </location>
</feature>
<feature type="mutagenesis site" description="Increased catalytic activity. Slightly increased catalytic activity; when associated with N-265. Strongly reduced catalytic activity; when associated with F-265 and N-315." evidence="5">
    <original>I</original>
    <variation>Y</variation>
    <location>
        <position position="157"/>
    </location>
</feature>
<feature type="mutagenesis site" description="Abolished catalytic activity; when associated with P-265 and Q-315." evidence="5">
    <original>F</original>
    <variation>Y</variation>
    <location>
        <position position="158"/>
    </location>
</feature>
<feature type="mutagenesis site" description="Altered substrate binding." evidence="3">
    <original>F</original>
    <variation>A</variation>
    <location>
        <position position="171"/>
    </location>
</feature>
<feature type="mutagenesis site" description="Altered substrate binding." evidence="3">
    <original>M</original>
    <variation>A</variation>
    <location>
        <position position="175"/>
    </location>
</feature>
<feature type="mutagenesis site" description="Abolished catalytic activity; when associated with W-316." evidence="5">
    <original>M</original>
    <variation>Y</variation>
    <location>
        <position position="175"/>
    </location>
</feature>
<feature type="mutagenesis site" description="Altered substrate binding." evidence="3">
    <original>D</original>
    <variation>A</variation>
    <location>
        <position position="226"/>
    </location>
</feature>
<feature type="mutagenesis site" description="Slightly increased catalytic activity. Strongly reduced catalytic activity; when associated with H-122. Strongly reduced catalytic activity; when associated with H-122 and F-126." evidence="5">
    <original>W</original>
    <variation>H</variation>
    <location>
        <position position="261"/>
    </location>
</feature>
<feature type="mutagenesis site" description="Abolished catalytic activity; when associated with Y-316." evidence="5">
    <original>W</original>
    <variation>K</variation>
    <location>
        <position position="261"/>
    </location>
</feature>
<feature type="mutagenesis site" description="Normal catalytic activity." evidence="5">
    <original>W</original>
    <variation>L</variation>
    <location>
        <position position="261"/>
    </location>
</feature>
<feature type="mutagenesis site" description="Altered catalytic activity." evidence="3">
    <original>H</original>
    <variation>A</variation>
    <location>
        <position position="264"/>
    </location>
</feature>
<feature type="mutagenesis site" description="Strongly reduced catalytic activity; when associated with Y-157 and N-315. Abolished catalytic activity; when associated with N-315 and I-320." evidence="5">
    <original>S</original>
    <variation>F</variation>
    <location>
        <position position="265"/>
    </location>
</feature>
<feature type="mutagenesis site" description="Abolished catalytic activity; when associated with N-315." evidence="5">
    <original>S</original>
    <variation>H</variation>
    <location>
        <position position="265"/>
    </location>
</feature>
<feature type="mutagenesis site" description="Increased catalytic activity." evidence="5">
    <original>S</original>
    <variation>I</variation>
    <location>
        <position position="265"/>
    </location>
</feature>
<feature type="mutagenesis site" description="Slightly increased catalytic activity. Slightly increased catalytic activity; when associated with Y-157." evidence="5">
    <original>S</original>
    <variation>N</variation>
    <location>
        <position position="265"/>
    </location>
</feature>
<feature type="mutagenesis site" description="Abolished catalytic activity; when associated with Y-158 and Q-315." evidence="5">
    <original>S</original>
    <variation>P</variation>
    <location>
        <position position="265"/>
    </location>
</feature>
<feature type="mutagenesis site" description="Altered substrate binding." evidence="3">
    <original>L</original>
    <variation>A</variation>
    <location>
        <position position="312"/>
    </location>
</feature>
<feature type="mutagenesis site" description="Strongly reduced catalytic activity." evidence="5">
    <original>V</original>
    <variation>F</variation>
    <location>
        <position position="315"/>
    </location>
</feature>
<feature type="mutagenesis site" description="Abolished catalytic activity; when associated with H-265. Strongly reduced catalytic activity; when associated with Y-157 and F-265. Abolished catalytic activity; when associated with F-265 and I-320." evidence="5">
    <original>V</original>
    <variation>N</variation>
    <location>
        <position position="315"/>
    </location>
</feature>
<feature type="mutagenesis site" description="Abolished catalytic activity; when associated with Y-158 and P-265." evidence="5">
    <original>V</original>
    <variation>Q</variation>
    <location>
        <position position="315"/>
    </location>
</feature>
<feature type="mutagenesis site" description="Abolished catalytic activity; when associated with Y-175." evidence="5">
    <original>M</original>
    <variation>W</variation>
    <location>
        <position position="316"/>
    </location>
</feature>
<feature type="mutagenesis site" description="Abolished catalytic activity; when associated with K-261." evidence="5">
    <original>M</original>
    <variation>Y</variation>
    <location>
        <position position="316"/>
    </location>
</feature>
<feature type="mutagenesis site" description="Strongly increased catalytic activity." evidence="5">
    <original>Y</original>
    <variation>F</variation>
    <location>
        <position position="319"/>
    </location>
</feature>
<feature type="mutagenesis site" description="Abolished catalytic activity." evidence="5">
    <original>Y</original>
    <variation>R</variation>
    <location>
        <position position="319"/>
    </location>
</feature>
<feature type="mutagenesis site" description="Strongly increased catalytic activity. Increased catalytic activity; when associated with F-157. Abolished catalytic activity; when associated with F-265 and N-315." evidence="5">
    <original>V</original>
    <variation>I</variation>
    <location>
        <position position="320"/>
    </location>
</feature>
<feature type="mutagenesis site" description="Slightly reduced catalytic activity." evidence="5">
    <original>V</original>
    <variation>Y</variation>
    <location>
        <position position="320"/>
    </location>
</feature>
<feature type="helix" evidence="10">
    <location>
        <begin position="9"/>
        <end position="22"/>
    </location>
</feature>
<feature type="turn" evidence="10">
    <location>
        <begin position="23"/>
        <end position="25"/>
    </location>
</feature>
<feature type="helix" evidence="10">
    <location>
        <begin position="26"/>
        <end position="36"/>
    </location>
</feature>
<feature type="helix" evidence="10">
    <location>
        <begin position="39"/>
        <end position="46"/>
    </location>
</feature>
<feature type="helix" evidence="10">
    <location>
        <begin position="54"/>
        <end position="60"/>
    </location>
</feature>
<feature type="helix" evidence="10">
    <location>
        <begin position="68"/>
        <end position="81"/>
    </location>
</feature>
<feature type="strand" evidence="10">
    <location>
        <begin position="84"/>
        <end position="91"/>
    </location>
</feature>
<feature type="strand" evidence="10">
    <location>
        <begin position="97"/>
        <end position="102"/>
    </location>
</feature>
<feature type="helix" evidence="10">
    <location>
        <begin position="105"/>
        <end position="109"/>
    </location>
</feature>
<feature type="helix" evidence="10">
    <location>
        <begin position="120"/>
        <end position="127"/>
    </location>
</feature>
<feature type="helix" evidence="10">
    <location>
        <begin position="129"/>
        <end position="132"/>
    </location>
</feature>
<feature type="helix" evidence="10">
    <location>
        <begin position="133"/>
        <end position="137"/>
    </location>
</feature>
<feature type="helix" evidence="10">
    <location>
        <begin position="138"/>
        <end position="144"/>
    </location>
</feature>
<feature type="helix" evidence="10">
    <location>
        <begin position="148"/>
        <end position="153"/>
    </location>
</feature>
<feature type="helix" evidence="10">
    <location>
        <begin position="157"/>
        <end position="163"/>
    </location>
</feature>
<feature type="helix" evidence="10">
    <location>
        <begin position="165"/>
        <end position="186"/>
    </location>
</feature>
<feature type="turn" evidence="10">
    <location>
        <begin position="187"/>
        <end position="189"/>
    </location>
</feature>
<feature type="turn" evidence="10">
    <location>
        <begin position="192"/>
        <end position="195"/>
    </location>
</feature>
<feature type="strand" evidence="10">
    <location>
        <begin position="197"/>
        <end position="202"/>
    </location>
</feature>
<feature type="helix" evidence="10">
    <location>
        <begin position="208"/>
        <end position="216"/>
    </location>
</feature>
<feature type="strand" evidence="10">
    <location>
        <begin position="220"/>
        <end position="226"/>
    </location>
</feature>
<feature type="helix" evidence="10">
    <location>
        <begin position="228"/>
        <end position="231"/>
    </location>
</feature>
<feature type="strand" evidence="10">
    <location>
        <begin position="240"/>
        <end position="244"/>
    </location>
</feature>
<feature type="turn" evidence="10">
    <location>
        <begin position="247"/>
        <end position="249"/>
    </location>
</feature>
<feature type="strand" evidence="10">
    <location>
        <begin position="255"/>
        <end position="261"/>
    </location>
</feature>
<feature type="helix" evidence="10">
    <location>
        <begin position="263"/>
        <end position="265"/>
    </location>
</feature>
<feature type="helix" evidence="10">
    <location>
        <begin position="268"/>
        <end position="281"/>
    </location>
</feature>
<feature type="strand" evidence="10">
    <location>
        <begin position="287"/>
        <end position="292"/>
    </location>
</feature>
<feature type="helix" evidence="10">
    <location>
        <begin position="304"/>
        <end position="319"/>
    </location>
</feature>
<feature type="helix" evidence="10">
    <location>
        <begin position="328"/>
        <end position="337"/>
    </location>
</feature>
<feature type="strand" evidence="10">
    <location>
        <begin position="347"/>
        <end position="349"/>
    </location>
</feature>
<feature type="strand" evidence="10">
    <location>
        <begin position="352"/>
        <end position="355"/>
    </location>
</feature>
<evidence type="ECO:0000250" key="1">
    <source>
        <dbReference type="UniProtKB" id="A0A4P8DY91"/>
    </source>
</evidence>
<evidence type="ECO:0000255" key="2">
    <source>
        <dbReference type="PROSITE-ProRule" id="PRU01020"/>
    </source>
</evidence>
<evidence type="ECO:0000269" key="3">
    <source>
    </source>
</evidence>
<evidence type="ECO:0000269" key="4">
    <source>
    </source>
</evidence>
<evidence type="ECO:0000269" key="5">
    <source>
    </source>
</evidence>
<evidence type="ECO:0000303" key="6">
    <source>
    </source>
</evidence>
<evidence type="ECO:0000303" key="7">
    <source>
    </source>
</evidence>
<evidence type="ECO:0000305" key="8"/>
<evidence type="ECO:0007744" key="9">
    <source>
        <dbReference type="PDB" id="5XOH"/>
    </source>
</evidence>
<evidence type="ECO:0007829" key="10">
    <source>
        <dbReference type="PDB" id="5XOH"/>
    </source>
</evidence>
<organism>
    <name type="scientific">Kitagawia praeruptora</name>
    <name type="common">Peucedanum praeruptorum</name>
    <dbReference type="NCBI Taxonomy" id="312531"/>
    <lineage>
        <taxon>Eukaryota</taxon>
        <taxon>Viridiplantae</taxon>
        <taxon>Streptophyta</taxon>
        <taxon>Embryophyta</taxon>
        <taxon>Tracheophyta</taxon>
        <taxon>Spermatophyta</taxon>
        <taxon>Magnoliopsida</taxon>
        <taxon>eudicotyledons</taxon>
        <taxon>Gunneridae</taxon>
        <taxon>Pentapetalae</taxon>
        <taxon>asterids</taxon>
        <taxon>campanulids</taxon>
        <taxon>Apiales</taxon>
        <taxon>Apiaceae</taxon>
        <taxon>Apioideae</taxon>
        <taxon>apioid superclade</taxon>
        <taxon>Selineae</taxon>
        <taxon>Kitagawia</taxon>
    </lineage>
</organism>
<keyword id="KW-0002">3D-structure</keyword>
<keyword id="KW-0963">Cytoplasm</keyword>
<keyword id="KW-0489">Methyltransferase</keyword>
<keyword id="KW-0949">S-adenosyl-L-methionine</keyword>
<keyword id="KW-0808">Transferase</keyword>
<gene>
    <name evidence="6" type="primary">BMT</name>
</gene>
<sequence>MAGMKTSPSQDEEACVLAIQLATSTVLPMILKSAIELDILNTISKAGPGNYLSPSDLASKLLMSNPHAPIMLERILRVLATYKVLGCKPSELSDGEVEWLYCWTPVCKFLSNNEDGASIAPLLLVHQDQVPMKSWYHLTDAILDGGTAFNKAYGMNIFDYASQDPQFNKVFNRSMAGHSTITMKKILETYNGFEGLKSIVDVGGGSGATLNMIISKYPTIKGINFDLPHVVGDSPIHPGVEHVGGDMFASVPKGDAIFLKWIFHSWSDEDCLRILKNCYEALADNKKVIVAEFIIPEVPGGSDDATKSVVHLDAVMLAYVPGGKERTEKEFEALATSAGFKSFRKVCCAFNTWIMEFSK</sequence>
<name>BMT_KITPR</name>
<proteinExistence type="evidence at protein level"/>
<protein>
    <recommendedName>
        <fullName evidence="6">Bergaptol O-methyltransferase</fullName>
        <shortName evidence="6">PpBMT</shortName>
        <ecNumber evidence="2 3 4 5">2.1.1.69</ecNumber>
    </recommendedName>
</protein>